<feature type="chain" id="PRO_0000141997" description="1-(5-phosphoribosyl)-5-[(5-phosphoribosylamino)methylideneamino] imidazole-4-carboxamide isomerase">
    <location>
        <begin position="1"/>
        <end position="246"/>
    </location>
</feature>
<feature type="active site" description="Proton acceptor" evidence="1">
    <location>
        <position position="8"/>
    </location>
</feature>
<feature type="active site" description="Proton donor" evidence="1">
    <location>
        <position position="131"/>
    </location>
</feature>
<proteinExistence type="inferred from homology"/>
<sequence length="246" mass="26034">MLLIPAIDLKDGQCVRLRQGAMDDATIFSDDPVKVAAHWRDQGARRLHLVDLNGAFAGKPKNLAVIRDILGEVGEDMPVQLGGGIRDLDTIEAYLDMGLAYVIIGTAAVKTPGFLHDACDAFPGQVIVGLDAKDGMVAIDGWAKITNHNVIDLAKRFEDYGVNSVIYTDIGRDGMMTGVNIEATVKLAQALTIPVIASGGLTNLDDIRALCAVEDEGIEGAITGRAIYEGSIDFAAAQTLADELAG</sequence>
<evidence type="ECO:0000255" key="1">
    <source>
        <dbReference type="HAMAP-Rule" id="MF_01014"/>
    </source>
</evidence>
<evidence type="ECO:0000305" key="2"/>
<dbReference type="EC" id="5.3.1.16" evidence="1"/>
<dbReference type="EMBL" id="AE016825">
    <property type="protein sequence ID" value="AAQ58293.1"/>
    <property type="status" value="ALT_INIT"/>
    <property type="molecule type" value="Genomic_DNA"/>
</dbReference>
<dbReference type="RefSeq" id="WP_011134172.1">
    <property type="nucleotide sequence ID" value="NC_005085.1"/>
</dbReference>
<dbReference type="SMR" id="Q7P0F0"/>
<dbReference type="STRING" id="243365.CV_0617"/>
<dbReference type="GeneID" id="66365477"/>
<dbReference type="KEGG" id="cvi:CV_0617"/>
<dbReference type="eggNOG" id="COG0106">
    <property type="taxonomic scope" value="Bacteria"/>
</dbReference>
<dbReference type="HOGENOM" id="CLU_048577_1_1_4"/>
<dbReference type="OrthoDB" id="9807749at2"/>
<dbReference type="UniPathway" id="UPA00031">
    <property type="reaction ID" value="UER00009"/>
</dbReference>
<dbReference type="Proteomes" id="UP000001424">
    <property type="component" value="Chromosome"/>
</dbReference>
<dbReference type="GO" id="GO:0005737">
    <property type="term" value="C:cytoplasm"/>
    <property type="evidence" value="ECO:0007669"/>
    <property type="project" value="UniProtKB-SubCell"/>
</dbReference>
<dbReference type="GO" id="GO:0003949">
    <property type="term" value="F:1-(5-phosphoribosyl)-5-[(5-phosphoribosylamino)methylideneamino]imidazole-4-carboxamide isomerase activity"/>
    <property type="evidence" value="ECO:0007669"/>
    <property type="project" value="UniProtKB-UniRule"/>
</dbReference>
<dbReference type="GO" id="GO:0000105">
    <property type="term" value="P:L-histidine biosynthetic process"/>
    <property type="evidence" value="ECO:0007669"/>
    <property type="project" value="UniProtKB-UniRule"/>
</dbReference>
<dbReference type="GO" id="GO:0000162">
    <property type="term" value="P:L-tryptophan biosynthetic process"/>
    <property type="evidence" value="ECO:0007669"/>
    <property type="project" value="TreeGrafter"/>
</dbReference>
<dbReference type="CDD" id="cd04732">
    <property type="entry name" value="HisA"/>
    <property type="match status" value="1"/>
</dbReference>
<dbReference type="FunFam" id="3.20.20.70:FF:000009">
    <property type="entry name" value="1-(5-phosphoribosyl)-5-[(5-phosphoribosylamino)methylideneamino] imidazole-4-carboxamide isomerase"/>
    <property type="match status" value="1"/>
</dbReference>
<dbReference type="Gene3D" id="3.20.20.70">
    <property type="entry name" value="Aldolase class I"/>
    <property type="match status" value="1"/>
</dbReference>
<dbReference type="HAMAP" id="MF_01014">
    <property type="entry name" value="HisA"/>
    <property type="match status" value="1"/>
</dbReference>
<dbReference type="InterPro" id="IPR013785">
    <property type="entry name" value="Aldolase_TIM"/>
</dbReference>
<dbReference type="InterPro" id="IPR006062">
    <property type="entry name" value="His_biosynth"/>
</dbReference>
<dbReference type="InterPro" id="IPR006063">
    <property type="entry name" value="HisA_bact_arch"/>
</dbReference>
<dbReference type="InterPro" id="IPR044524">
    <property type="entry name" value="Isoase_HisA-like"/>
</dbReference>
<dbReference type="InterPro" id="IPR023016">
    <property type="entry name" value="Isoase_HisA-like_bact"/>
</dbReference>
<dbReference type="InterPro" id="IPR011060">
    <property type="entry name" value="RibuloseP-bd_barrel"/>
</dbReference>
<dbReference type="NCBIfam" id="TIGR00007">
    <property type="entry name" value="1-(5-phosphoribosyl)-5-[(5-phosphoribosylamino)methylideneamino]imidazole-4-carboxamide isomerase"/>
    <property type="match status" value="1"/>
</dbReference>
<dbReference type="NCBIfam" id="NF010112">
    <property type="entry name" value="PRK13585.1"/>
    <property type="match status" value="1"/>
</dbReference>
<dbReference type="PANTHER" id="PTHR43090">
    <property type="entry name" value="1-(5-PHOSPHORIBOSYL)-5-[(5-PHOSPHORIBOSYLAMINO)METHYLIDENEAMINO] IMIDAZOLE-4-CARBOXAMIDE ISOMERASE"/>
    <property type="match status" value="1"/>
</dbReference>
<dbReference type="PANTHER" id="PTHR43090:SF2">
    <property type="entry name" value="1-(5-PHOSPHORIBOSYL)-5-[(5-PHOSPHORIBOSYLAMINO)METHYLIDENEAMINO] IMIDAZOLE-4-CARBOXAMIDE ISOMERASE"/>
    <property type="match status" value="1"/>
</dbReference>
<dbReference type="Pfam" id="PF00977">
    <property type="entry name" value="His_biosynth"/>
    <property type="match status" value="1"/>
</dbReference>
<dbReference type="SUPFAM" id="SSF51366">
    <property type="entry name" value="Ribulose-phoshate binding barrel"/>
    <property type="match status" value="1"/>
</dbReference>
<comment type="catalytic activity">
    <reaction evidence="1">
        <text>1-(5-phospho-beta-D-ribosyl)-5-[(5-phospho-beta-D-ribosylamino)methylideneamino]imidazole-4-carboxamide = 5-[(5-phospho-1-deoxy-D-ribulos-1-ylimino)methylamino]-1-(5-phospho-beta-D-ribosyl)imidazole-4-carboxamide</text>
        <dbReference type="Rhea" id="RHEA:15469"/>
        <dbReference type="ChEBI" id="CHEBI:58435"/>
        <dbReference type="ChEBI" id="CHEBI:58525"/>
        <dbReference type="EC" id="5.3.1.16"/>
    </reaction>
</comment>
<comment type="pathway">
    <text evidence="1">Amino-acid biosynthesis; L-histidine biosynthesis; L-histidine from 5-phospho-alpha-D-ribose 1-diphosphate: step 4/9.</text>
</comment>
<comment type="subcellular location">
    <subcellularLocation>
        <location evidence="1">Cytoplasm</location>
    </subcellularLocation>
</comment>
<comment type="similarity">
    <text evidence="1">Belongs to the HisA/HisF family.</text>
</comment>
<comment type="sequence caution" evidence="2">
    <conflict type="erroneous initiation">
        <sequence resource="EMBL-CDS" id="AAQ58293"/>
    </conflict>
</comment>
<name>HIS4_CHRVO</name>
<protein>
    <recommendedName>
        <fullName evidence="1">1-(5-phosphoribosyl)-5-[(5-phosphoribosylamino)methylideneamino] imidazole-4-carboxamide isomerase</fullName>
        <ecNumber evidence="1">5.3.1.16</ecNumber>
    </recommendedName>
    <alternativeName>
        <fullName evidence="1">Phosphoribosylformimino-5-aminoimidazole carboxamide ribotide isomerase</fullName>
    </alternativeName>
</protein>
<accession>Q7P0F0</accession>
<organism>
    <name type="scientific">Chromobacterium violaceum (strain ATCC 12472 / DSM 30191 / JCM 1249 / CCUG 213 / NBRC 12614 / NCIMB 9131 / NCTC 9757 / MK)</name>
    <dbReference type="NCBI Taxonomy" id="243365"/>
    <lineage>
        <taxon>Bacteria</taxon>
        <taxon>Pseudomonadati</taxon>
        <taxon>Pseudomonadota</taxon>
        <taxon>Betaproteobacteria</taxon>
        <taxon>Neisseriales</taxon>
        <taxon>Chromobacteriaceae</taxon>
        <taxon>Chromobacterium</taxon>
    </lineage>
</organism>
<gene>
    <name evidence="1" type="primary">hisA</name>
    <name type="ordered locus">CV_0617</name>
</gene>
<reference key="1">
    <citation type="journal article" date="2003" name="Proc. Natl. Acad. Sci. U.S.A.">
        <title>The complete genome sequence of Chromobacterium violaceum reveals remarkable and exploitable bacterial adaptability.</title>
        <authorList>
            <person name="Vasconcelos A.T.R."/>
            <person name="de Almeida D.F."/>
            <person name="Hungria M."/>
            <person name="Guimaraes C.T."/>
            <person name="Antonio R.V."/>
            <person name="Almeida F.C."/>
            <person name="de Almeida L.G.P."/>
            <person name="de Almeida R."/>
            <person name="Alves-Gomes J.A."/>
            <person name="Andrade E.M."/>
            <person name="Araripe J."/>
            <person name="de Araujo M.F.F."/>
            <person name="Astolfi-Filho S."/>
            <person name="Azevedo V."/>
            <person name="Baptista A.J."/>
            <person name="Bataus L.A.M."/>
            <person name="Batista J.S."/>
            <person name="Belo A."/>
            <person name="van den Berg C."/>
            <person name="Bogo M."/>
            <person name="Bonatto S."/>
            <person name="Bordignon J."/>
            <person name="Brigido M.M."/>
            <person name="Brito C.A."/>
            <person name="Brocchi M."/>
            <person name="Burity H.A."/>
            <person name="Camargo A.A."/>
            <person name="Cardoso D.D.P."/>
            <person name="Carneiro N.P."/>
            <person name="Carraro D.M."/>
            <person name="Carvalho C.M.B."/>
            <person name="Cascardo J.C.M."/>
            <person name="Cavada B.S."/>
            <person name="Chueire L.M.O."/>
            <person name="Creczynski-Pasa T.B."/>
            <person name="Cunha-Junior N.C."/>
            <person name="Fagundes N."/>
            <person name="Falcao C.L."/>
            <person name="Fantinatti F."/>
            <person name="Farias I.P."/>
            <person name="Felipe M.S.S."/>
            <person name="Ferrari L.P."/>
            <person name="Ferro J.A."/>
            <person name="Ferro M.I.T."/>
            <person name="Franco G.R."/>
            <person name="Freitas N.S.A."/>
            <person name="Furlan L.R."/>
            <person name="Gazzinelli R.T."/>
            <person name="Gomes E.A."/>
            <person name="Goncalves P.R."/>
            <person name="Grangeiro T.B."/>
            <person name="Grattapaglia D."/>
            <person name="Grisard E.C."/>
            <person name="Hanna E.S."/>
            <person name="Jardim S.N."/>
            <person name="Laurino J."/>
            <person name="Leoi L.C.T."/>
            <person name="Lima L.F.A."/>
            <person name="Loureiro M.F."/>
            <person name="Lyra M.C.C.P."/>
            <person name="Madeira H.M.F."/>
            <person name="Manfio G.P."/>
            <person name="Maranhao A.Q."/>
            <person name="Martins W.S."/>
            <person name="di Mauro S.M.Z."/>
            <person name="de Medeiros S.R.B."/>
            <person name="Meissner R.V."/>
            <person name="Moreira M.A.M."/>
            <person name="Nascimento F.F."/>
            <person name="Nicolas M.F."/>
            <person name="Oliveira J.G."/>
            <person name="Oliveira S.C."/>
            <person name="Paixao R.F.C."/>
            <person name="Parente J.A."/>
            <person name="Pedrosa F.O."/>
            <person name="Pena S.D.J."/>
            <person name="Pereira J.O."/>
            <person name="Pereira M."/>
            <person name="Pinto L.S.R.C."/>
            <person name="Pinto L.S."/>
            <person name="Porto J.I.R."/>
            <person name="Potrich D.P."/>
            <person name="Ramalho-Neto C.E."/>
            <person name="Reis A.M.M."/>
            <person name="Rigo L.U."/>
            <person name="Rondinelli E."/>
            <person name="Santos E.B.P."/>
            <person name="Santos F.R."/>
            <person name="Schneider M.P.C."/>
            <person name="Seuanez H.N."/>
            <person name="Silva A.M.R."/>
            <person name="da Silva A.L.C."/>
            <person name="Silva D.W."/>
            <person name="Silva R."/>
            <person name="Simoes I.C."/>
            <person name="Simon D."/>
            <person name="Soares C.M.A."/>
            <person name="Soares R.B.A."/>
            <person name="Souza E.M."/>
            <person name="Souza K.R.L."/>
            <person name="Souza R.C."/>
            <person name="Steffens M.B.R."/>
            <person name="Steindel M."/>
            <person name="Teixeira S.R."/>
            <person name="Urmenyi T."/>
            <person name="Vettore A."/>
            <person name="Wassem R."/>
            <person name="Zaha A."/>
            <person name="Simpson A.J.G."/>
        </authorList>
    </citation>
    <scope>NUCLEOTIDE SEQUENCE [LARGE SCALE GENOMIC DNA]</scope>
    <source>
        <strain>ATCC 12472 / DSM 30191 / JCM 1249 / CCUG 213 / NBRC 12614 / NCIMB 9131 / NCTC 9757 / MK</strain>
    </source>
</reference>
<keyword id="KW-0028">Amino-acid biosynthesis</keyword>
<keyword id="KW-0963">Cytoplasm</keyword>
<keyword id="KW-0368">Histidine biosynthesis</keyword>
<keyword id="KW-0413">Isomerase</keyword>
<keyword id="KW-1185">Reference proteome</keyword>